<dbReference type="EC" id="5.2.1.8"/>
<dbReference type="EMBL" id="AB019518">
    <property type="protein sequence ID" value="BAA34384.1"/>
    <property type="molecule type" value="mRNA"/>
</dbReference>
<dbReference type="SMR" id="O93826"/>
<dbReference type="GlyCosmos" id="O93826">
    <property type="glycosylation" value="1 site, No reported glycans"/>
</dbReference>
<dbReference type="GO" id="GO:0005788">
    <property type="term" value="C:endoplasmic reticulum lumen"/>
    <property type="evidence" value="ECO:0007669"/>
    <property type="project" value="UniProtKB-SubCell"/>
</dbReference>
<dbReference type="GO" id="GO:0000324">
    <property type="term" value="C:fungal-type vacuole"/>
    <property type="evidence" value="ECO:0007669"/>
    <property type="project" value="TreeGrafter"/>
</dbReference>
<dbReference type="GO" id="GO:0016018">
    <property type="term" value="F:cyclosporin A binding"/>
    <property type="evidence" value="ECO:0007669"/>
    <property type="project" value="TreeGrafter"/>
</dbReference>
<dbReference type="GO" id="GO:0003755">
    <property type="term" value="F:peptidyl-prolyl cis-trans isomerase activity"/>
    <property type="evidence" value="ECO:0007669"/>
    <property type="project" value="UniProtKB-KW"/>
</dbReference>
<dbReference type="GO" id="GO:0006457">
    <property type="term" value="P:protein folding"/>
    <property type="evidence" value="ECO:0007669"/>
    <property type="project" value="InterPro"/>
</dbReference>
<dbReference type="CDD" id="cd01926">
    <property type="entry name" value="cyclophilin_ABH_like"/>
    <property type="match status" value="1"/>
</dbReference>
<dbReference type="FunFam" id="2.40.100.10:FF:000001">
    <property type="entry name" value="Peptidyl-prolyl cis-trans isomerase"/>
    <property type="match status" value="1"/>
</dbReference>
<dbReference type="Gene3D" id="2.40.100.10">
    <property type="entry name" value="Cyclophilin-like"/>
    <property type="match status" value="1"/>
</dbReference>
<dbReference type="InterPro" id="IPR029000">
    <property type="entry name" value="Cyclophilin-like_dom_sf"/>
</dbReference>
<dbReference type="InterPro" id="IPR020892">
    <property type="entry name" value="Cyclophilin-type_PPIase_CS"/>
</dbReference>
<dbReference type="InterPro" id="IPR002130">
    <property type="entry name" value="Cyclophilin-type_PPIase_dom"/>
</dbReference>
<dbReference type="PANTHER" id="PTHR11071">
    <property type="entry name" value="PEPTIDYL-PROLYL CIS-TRANS ISOMERASE"/>
    <property type="match status" value="1"/>
</dbReference>
<dbReference type="PANTHER" id="PTHR11071:SF561">
    <property type="entry name" value="PEPTIDYL-PROLYL CIS-TRANS ISOMERASE D-RELATED"/>
    <property type="match status" value="1"/>
</dbReference>
<dbReference type="Pfam" id="PF00160">
    <property type="entry name" value="Pro_isomerase"/>
    <property type="match status" value="1"/>
</dbReference>
<dbReference type="PRINTS" id="PR00153">
    <property type="entry name" value="CSAPPISMRASE"/>
</dbReference>
<dbReference type="SUPFAM" id="SSF50891">
    <property type="entry name" value="Cyclophilin-like"/>
    <property type="match status" value="1"/>
</dbReference>
<dbReference type="PROSITE" id="PS00170">
    <property type="entry name" value="CSA_PPIASE_1"/>
    <property type="match status" value="1"/>
</dbReference>
<dbReference type="PROSITE" id="PS50072">
    <property type="entry name" value="CSA_PPIASE_2"/>
    <property type="match status" value="1"/>
</dbReference>
<reference key="1">
    <citation type="journal article" date="2000" name="Microbiol. Immunol.">
        <title>Characterization of the cyclophilin of Trichophyton mentagrophytes.</title>
        <authorList>
            <person name="Kano R."/>
            <person name="Nakamura Y."/>
            <person name="Watanabe S."/>
            <person name="Tsujimoto H."/>
            <person name="Hasegawa A."/>
        </authorList>
    </citation>
    <scope>NUCLEOTIDE SEQUENCE [MRNA]</scope>
    <source>
        <strain>VUT-77011</strain>
    </source>
</reference>
<keyword id="KW-0256">Endoplasmic reticulum</keyword>
<keyword id="KW-0325">Glycoprotein</keyword>
<keyword id="KW-0413">Isomerase</keyword>
<keyword id="KW-0697">Rotamase</keyword>
<keyword id="KW-0732">Signal</keyword>
<name>PPIB_ARTBE</name>
<proteinExistence type="evidence at transcript level"/>
<protein>
    <recommendedName>
        <fullName>Peptidyl-prolyl cis-trans isomerase B</fullName>
        <shortName>PPIase B</shortName>
        <ecNumber>5.2.1.8</ecNumber>
    </recommendedName>
    <alternativeName>
        <fullName>Rotamase B</fullName>
    </alternativeName>
</protein>
<gene>
    <name type="primary">CPR2</name>
</gene>
<accession>O93826</accession>
<sequence>MARIGRILTLVVFAAVGLFLFMGQTVEAKGPKITSKVYFDIEHDGQPLGRIVMGLYGKTVPKTAENFRALATGEKGFGYEGSTFHRVIKDFMIQGGDFTNGDGTGGKSIYGNKFEDENFKLRHTKKGVLSMANAGKDTNGSQFFITTAITAWLDGKHVVFGEVLEGYDIVDKIQVVPKGFQDRPTKDVKIVKCGELDMKEEAEGEGTESPSKPDSEKEQAPVRDEI</sequence>
<evidence type="ECO:0000250" key="1"/>
<evidence type="ECO:0000255" key="2"/>
<evidence type="ECO:0000255" key="3">
    <source>
        <dbReference type="PROSITE-ProRule" id="PRU00156"/>
    </source>
</evidence>
<evidence type="ECO:0000256" key="4">
    <source>
        <dbReference type="SAM" id="MobiDB-lite"/>
    </source>
</evidence>
<evidence type="ECO:0000305" key="5"/>
<feature type="signal peptide" evidence="2">
    <location>
        <begin position="1"/>
        <end position="28"/>
    </location>
</feature>
<feature type="chain" id="PRO_0000233042" description="Peptidyl-prolyl cis-trans isomerase B">
    <location>
        <begin position="29"/>
        <end position="226"/>
    </location>
</feature>
<feature type="domain" description="PPIase cyclophilin-type" evidence="3">
    <location>
        <begin position="38"/>
        <end position="195"/>
    </location>
</feature>
<feature type="region of interest" description="Disordered" evidence="4">
    <location>
        <begin position="194"/>
        <end position="226"/>
    </location>
</feature>
<feature type="short sequence motif" description="Prevents secretion from ER">
    <location>
        <begin position="223"/>
        <end position="226"/>
    </location>
</feature>
<feature type="compositionally biased region" description="Basic and acidic residues" evidence="4">
    <location>
        <begin position="211"/>
        <end position="226"/>
    </location>
</feature>
<feature type="glycosylation site" description="N-linked (GlcNAc...) asparagine" evidence="2">
    <location>
        <position position="139"/>
    </location>
</feature>
<comment type="function">
    <text evidence="1">PPIases accelerate the folding of proteins. It catalyzes the cis-trans isomerization of proline imidic peptide bonds in oligopeptides (By similarity).</text>
</comment>
<comment type="catalytic activity">
    <reaction>
        <text>[protein]-peptidylproline (omega=180) = [protein]-peptidylproline (omega=0)</text>
        <dbReference type="Rhea" id="RHEA:16237"/>
        <dbReference type="Rhea" id="RHEA-COMP:10747"/>
        <dbReference type="Rhea" id="RHEA-COMP:10748"/>
        <dbReference type="ChEBI" id="CHEBI:83833"/>
        <dbReference type="ChEBI" id="CHEBI:83834"/>
        <dbReference type="EC" id="5.2.1.8"/>
    </reaction>
</comment>
<comment type="activity regulation">
    <text evidence="1">Inhibited by cyclosporin A (CsA).</text>
</comment>
<comment type="subcellular location">
    <subcellularLocation>
        <location evidence="1">Endoplasmic reticulum lumen</location>
    </subcellularLocation>
</comment>
<comment type="similarity">
    <text evidence="5">Belongs to the cyclophilin-type PPIase family. PPIase B subfamily.</text>
</comment>
<organism>
    <name type="scientific">Arthroderma benhamiae</name>
    <name type="common">Trichophyton mentagrophytes</name>
    <dbReference type="NCBI Taxonomy" id="63400"/>
    <lineage>
        <taxon>Eukaryota</taxon>
        <taxon>Fungi</taxon>
        <taxon>Dikarya</taxon>
        <taxon>Ascomycota</taxon>
        <taxon>Pezizomycotina</taxon>
        <taxon>Eurotiomycetes</taxon>
        <taxon>Eurotiomycetidae</taxon>
        <taxon>Onygenales</taxon>
        <taxon>Arthrodermataceae</taxon>
        <taxon>Trichophyton</taxon>
    </lineage>
</organism>